<feature type="chain" id="PRO_0000322362" description="Small ribosomal subunit protein uS4c">
    <location>
        <begin position="1"/>
        <end position="201"/>
    </location>
</feature>
<feature type="domain" description="S4 RNA-binding">
    <location>
        <begin position="89"/>
        <end position="149"/>
    </location>
</feature>
<feature type="region of interest" description="Disordered" evidence="2">
    <location>
        <begin position="20"/>
        <end position="43"/>
    </location>
</feature>
<reference key="1">
    <citation type="journal article" date="2007" name="Mol. Phylogenet. Evol.">
        <title>Phylogenetic and evolutionary implications of complete chloroplast genome sequences of four early-diverging angiosperms: Buxus (Buxaceae), Chloranthus (Chloranthaceae), Dioscorea (Dioscoreaceae), and Illicium (Schisandraceae).</title>
        <authorList>
            <person name="Hansen D.R."/>
            <person name="Dastidar S.G."/>
            <person name="Cai Z."/>
            <person name="Penaflor C."/>
            <person name="Kuehl J.V."/>
            <person name="Boore J.L."/>
            <person name="Jansen R.K."/>
        </authorList>
    </citation>
    <scope>NUCLEOTIDE SEQUENCE [LARGE SCALE GENOMIC DNA]</scope>
</reference>
<organism>
    <name type="scientific">Buxus microphylla</name>
    <name type="common">Littleleaf boxwood</name>
    <name type="synonym">Japanese boxwood</name>
    <dbReference type="NCBI Taxonomy" id="153571"/>
    <lineage>
        <taxon>Eukaryota</taxon>
        <taxon>Viridiplantae</taxon>
        <taxon>Streptophyta</taxon>
        <taxon>Embryophyta</taxon>
        <taxon>Tracheophyta</taxon>
        <taxon>Spermatophyta</taxon>
        <taxon>Magnoliopsida</taxon>
        <taxon>Buxales</taxon>
        <taxon>Buxaceae</taxon>
        <taxon>Buxus</taxon>
    </lineage>
</organism>
<evidence type="ECO:0000250" key="1"/>
<evidence type="ECO:0000256" key="2">
    <source>
        <dbReference type="SAM" id="MobiDB-lite"/>
    </source>
</evidence>
<evidence type="ECO:0000305" key="3"/>
<proteinExistence type="inferred from homology"/>
<dbReference type="EMBL" id="EF380351">
    <property type="protein sequence ID" value="ABQ45251.1"/>
    <property type="molecule type" value="Genomic_DNA"/>
</dbReference>
<dbReference type="RefSeq" id="YP_001294186.1">
    <property type="nucleotide sequence ID" value="NC_009599.1"/>
</dbReference>
<dbReference type="SMR" id="A6MM38"/>
<dbReference type="GeneID" id="5236906"/>
<dbReference type="GO" id="GO:0009507">
    <property type="term" value="C:chloroplast"/>
    <property type="evidence" value="ECO:0007669"/>
    <property type="project" value="UniProtKB-SubCell"/>
</dbReference>
<dbReference type="GO" id="GO:0015935">
    <property type="term" value="C:small ribosomal subunit"/>
    <property type="evidence" value="ECO:0007669"/>
    <property type="project" value="InterPro"/>
</dbReference>
<dbReference type="GO" id="GO:0019843">
    <property type="term" value="F:rRNA binding"/>
    <property type="evidence" value="ECO:0007669"/>
    <property type="project" value="UniProtKB-UniRule"/>
</dbReference>
<dbReference type="GO" id="GO:0003735">
    <property type="term" value="F:structural constituent of ribosome"/>
    <property type="evidence" value="ECO:0007669"/>
    <property type="project" value="InterPro"/>
</dbReference>
<dbReference type="GO" id="GO:0042274">
    <property type="term" value="P:ribosomal small subunit biogenesis"/>
    <property type="evidence" value="ECO:0007669"/>
    <property type="project" value="TreeGrafter"/>
</dbReference>
<dbReference type="GO" id="GO:0006412">
    <property type="term" value="P:translation"/>
    <property type="evidence" value="ECO:0007669"/>
    <property type="project" value="UniProtKB-UniRule"/>
</dbReference>
<dbReference type="CDD" id="cd00165">
    <property type="entry name" value="S4"/>
    <property type="match status" value="1"/>
</dbReference>
<dbReference type="FunFam" id="1.10.1050.10:FF:000002">
    <property type="entry name" value="30S ribosomal protein S4, chloroplastic"/>
    <property type="match status" value="1"/>
</dbReference>
<dbReference type="FunFam" id="3.10.290.10:FF:000081">
    <property type="entry name" value="30S ribosomal protein S4, chloroplastic"/>
    <property type="match status" value="1"/>
</dbReference>
<dbReference type="Gene3D" id="1.10.1050.10">
    <property type="entry name" value="Ribosomal Protein S4 Delta 41, Chain A, domain 1"/>
    <property type="match status" value="1"/>
</dbReference>
<dbReference type="Gene3D" id="3.10.290.10">
    <property type="entry name" value="RNA-binding S4 domain"/>
    <property type="match status" value="1"/>
</dbReference>
<dbReference type="HAMAP" id="MF_01306_B">
    <property type="entry name" value="Ribosomal_uS4_B"/>
    <property type="match status" value="1"/>
</dbReference>
<dbReference type="InterPro" id="IPR022801">
    <property type="entry name" value="Ribosomal_uS4"/>
</dbReference>
<dbReference type="InterPro" id="IPR005709">
    <property type="entry name" value="Ribosomal_uS4_bac-type"/>
</dbReference>
<dbReference type="InterPro" id="IPR018079">
    <property type="entry name" value="Ribosomal_uS4_CS"/>
</dbReference>
<dbReference type="InterPro" id="IPR001912">
    <property type="entry name" value="Ribosomal_uS4_N"/>
</dbReference>
<dbReference type="InterPro" id="IPR002942">
    <property type="entry name" value="S4_RNA-bd"/>
</dbReference>
<dbReference type="InterPro" id="IPR036986">
    <property type="entry name" value="S4_RNA-bd_sf"/>
</dbReference>
<dbReference type="NCBIfam" id="NF003717">
    <property type="entry name" value="PRK05327.1"/>
    <property type="match status" value="1"/>
</dbReference>
<dbReference type="NCBIfam" id="TIGR01017">
    <property type="entry name" value="rpsD_bact"/>
    <property type="match status" value="1"/>
</dbReference>
<dbReference type="PANTHER" id="PTHR11831">
    <property type="entry name" value="30S 40S RIBOSOMAL PROTEIN"/>
    <property type="match status" value="1"/>
</dbReference>
<dbReference type="PANTHER" id="PTHR11831:SF4">
    <property type="entry name" value="SMALL RIBOSOMAL SUBUNIT PROTEIN US4M"/>
    <property type="match status" value="1"/>
</dbReference>
<dbReference type="Pfam" id="PF00163">
    <property type="entry name" value="Ribosomal_S4"/>
    <property type="match status" value="1"/>
</dbReference>
<dbReference type="Pfam" id="PF01479">
    <property type="entry name" value="S4"/>
    <property type="match status" value="1"/>
</dbReference>
<dbReference type="SMART" id="SM01390">
    <property type="entry name" value="Ribosomal_S4"/>
    <property type="match status" value="1"/>
</dbReference>
<dbReference type="SMART" id="SM00363">
    <property type="entry name" value="S4"/>
    <property type="match status" value="1"/>
</dbReference>
<dbReference type="SUPFAM" id="SSF55174">
    <property type="entry name" value="Alpha-L RNA-binding motif"/>
    <property type="match status" value="1"/>
</dbReference>
<dbReference type="PROSITE" id="PS00632">
    <property type="entry name" value="RIBOSOMAL_S4"/>
    <property type="match status" value="1"/>
</dbReference>
<dbReference type="PROSITE" id="PS50889">
    <property type="entry name" value="S4"/>
    <property type="match status" value="1"/>
</dbReference>
<keyword id="KW-0150">Chloroplast</keyword>
<keyword id="KW-0934">Plastid</keyword>
<keyword id="KW-0687">Ribonucleoprotein</keyword>
<keyword id="KW-0689">Ribosomal protein</keyword>
<keyword id="KW-0694">RNA-binding</keyword>
<keyword id="KW-0699">rRNA-binding</keyword>
<accession>A6MM38</accession>
<geneLocation type="chloroplast"/>
<name>RR4_BUXMI</name>
<gene>
    <name type="primary">rps4</name>
</gene>
<sequence length="201" mass="23374">MSRYRGPRFKKIRRLGALPGLTSKRPRAGSDLRNQSRSGKRSQYRIRLEEKQKLRFHYGLTERQLLKYVRIAGKAKGSTGQVLLQLLEMRLDNILFRLGMASTIPGARQLVNHRHILVNGRIVDIPSYRCKPRDIITAKDEQKSRALIQNYLDSSPHEELPKHLTLHSFQYKGLVNQIIDSKWVGLKINELLVVEYYSRQT</sequence>
<protein>
    <recommendedName>
        <fullName evidence="3">Small ribosomal subunit protein uS4c</fullName>
    </recommendedName>
    <alternativeName>
        <fullName>30S ribosomal protein S4, chloroplastic</fullName>
    </alternativeName>
</protein>
<comment type="function">
    <text evidence="1">One of the primary rRNA binding proteins, it binds directly to 16S rRNA where it nucleates assembly of the body of the 30S subunit.</text>
</comment>
<comment type="function">
    <text evidence="1">With S5 and S12 plays an important role in translational accuracy.</text>
</comment>
<comment type="subunit">
    <text evidence="1">Part of the 30S ribosomal subunit. Contacts protein S5. The interaction surface between S4 and S5 is involved in control of translational fidelity (By similarity).</text>
</comment>
<comment type="subcellular location">
    <subcellularLocation>
        <location>Plastid</location>
        <location>Chloroplast</location>
    </subcellularLocation>
</comment>
<comment type="similarity">
    <text evidence="3">Belongs to the universal ribosomal protein uS4 family.</text>
</comment>